<gene>
    <name type="ordered locus">CHY_0543</name>
</gene>
<name>Y543_CARHZ</name>
<accession>Q3AEN3</accession>
<keyword id="KW-1185">Reference proteome</keyword>
<dbReference type="EMBL" id="CP000141">
    <property type="protein sequence ID" value="ABB15507.1"/>
    <property type="molecule type" value="Genomic_DNA"/>
</dbReference>
<dbReference type="RefSeq" id="WP_011343477.1">
    <property type="nucleotide sequence ID" value="NC_007503.1"/>
</dbReference>
<dbReference type="STRING" id="246194.CHY_0543"/>
<dbReference type="KEGG" id="chy:CHY_0543"/>
<dbReference type="eggNOG" id="COG3906">
    <property type="taxonomic scope" value="Bacteria"/>
</dbReference>
<dbReference type="HOGENOM" id="CLU_146610_8_1_9"/>
<dbReference type="InParanoid" id="Q3AEN3"/>
<dbReference type="OrthoDB" id="9811971at2"/>
<dbReference type="Proteomes" id="UP000002706">
    <property type="component" value="Chromosome"/>
</dbReference>
<dbReference type="HAMAP" id="MF_01448">
    <property type="entry name" value="UPF0473"/>
    <property type="match status" value="1"/>
</dbReference>
<dbReference type="InterPro" id="IPR009711">
    <property type="entry name" value="UPF0473"/>
</dbReference>
<dbReference type="Pfam" id="PF06949">
    <property type="entry name" value="DUF1292"/>
    <property type="match status" value="1"/>
</dbReference>
<protein>
    <recommendedName>
        <fullName evidence="1">UPF0473 protein CHY_0543</fullName>
    </recommendedName>
</protein>
<comment type="similarity">
    <text evidence="1">Belongs to the UPF0473 family.</text>
</comment>
<reference key="1">
    <citation type="journal article" date="2005" name="PLoS Genet.">
        <title>Life in hot carbon monoxide: the complete genome sequence of Carboxydothermus hydrogenoformans Z-2901.</title>
        <authorList>
            <person name="Wu M."/>
            <person name="Ren Q."/>
            <person name="Durkin A.S."/>
            <person name="Daugherty S.C."/>
            <person name="Brinkac L.M."/>
            <person name="Dodson R.J."/>
            <person name="Madupu R."/>
            <person name="Sullivan S.A."/>
            <person name="Kolonay J.F."/>
            <person name="Nelson W.C."/>
            <person name="Tallon L.J."/>
            <person name="Jones K.M."/>
            <person name="Ulrich L.E."/>
            <person name="Gonzalez J.M."/>
            <person name="Zhulin I.B."/>
            <person name="Robb F.T."/>
            <person name="Eisen J.A."/>
        </authorList>
    </citation>
    <scope>NUCLEOTIDE SEQUENCE [LARGE SCALE GENOMIC DNA]</scope>
    <source>
        <strain>ATCC BAA-161 / DSM 6008 / Z-2901</strain>
    </source>
</reference>
<proteinExistence type="inferred from homology"/>
<evidence type="ECO:0000255" key="1">
    <source>
        <dbReference type="HAMAP-Rule" id="MF_01448"/>
    </source>
</evidence>
<feature type="chain" id="PRO_0000304821" description="UPF0473 protein CHY_0543">
    <location>
        <begin position="1"/>
        <end position="93"/>
    </location>
</feature>
<organism>
    <name type="scientific">Carboxydothermus hydrogenoformans (strain ATCC BAA-161 / DSM 6008 / Z-2901)</name>
    <dbReference type="NCBI Taxonomy" id="246194"/>
    <lineage>
        <taxon>Bacteria</taxon>
        <taxon>Bacillati</taxon>
        <taxon>Bacillota</taxon>
        <taxon>Clostridia</taxon>
        <taxon>Thermoanaerobacterales</taxon>
        <taxon>Thermoanaerobacteraceae</taxon>
        <taxon>Carboxydothermus</taxon>
    </lineage>
</organism>
<sequence>MEVGEVITLVDEEQNEFEFAVIDLLEVEGKKYAILVPAVEEDEEELEDEEEAVILRLEMDEDGNEILVDLEDEEWEMVADAWTEKMEDEGSDE</sequence>